<organism>
    <name type="scientific">Haemophilus influenzae (strain PittEE)</name>
    <dbReference type="NCBI Taxonomy" id="374930"/>
    <lineage>
        <taxon>Bacteria</taxon>
        <taxon>Pseudomonadati</taxon>
        <taxon>Pseudomonadota</taxon>
        <taxon>Gammaproteobacteria</taxon>
        <taxon>Pasteurellales</taxon>
        <taxon>Pasteurellaceae</taxon>
        <taxon>Haemophilus</taxon>
    </lineage>
</organism>
<comment type="function">
    <text evidence="1">Catalyzes the transfer of endogenously produced octanoic acid from octanoyl-acyl-carrier-protein onto the lipoyl domains of lipoate-dependent enzymes. Lipoyl-ACP can also act as a substrate although octanoyl-ACP is likely to be the physiological substrate.</text>
</comment>
<comment type="catalytic activity">
    <reaction evidence="1">
        <text>octanoyl-[ACP] + L-lysyl-[protein] = N(6)-octanoyl-L-lysyl-[protein] + holo-[ACP] + H(+)</text>
        <dbReference type="Rhea" id="RHEA:17665"/>
        <dbReference type="Rhea" id="RHEA-COMP:9636"/>
        <dbReference type="Rhea" id="RHEA-COMP:9685"/>
        <dbReference type="Rhea" id="RHEA-COMP:9752"/>
        <dbReference type="Rhea" id="RHEA-COMP:9928"/>
        <dbReference type="ChEBI" id="CHEBI:15378"/>
        <dbReference type="ChEBI" id="CHEBI:29969"/>
        <dbReference type="ChEBI" id="CHEBI:64479"/>
        <dbReference type="ChEBI" id="CHEBI:78463"/>
        <dbReference type="ChEBI" id="CHEBI:78809"/>
        <dbReference type="EC" id="2.3.1.181"/>
    </reaction>
</comment>
<comment type="pathway">
    <text evidence="1">Protein modification; protein lipoylation via endogenous pathway; protein N(6)-(lipoyl)lysine from octanoyl-[acyl-carrier-protein]: step 1/2.</text>
</comment>
<comment type="subcellular location">
    <subcellularLocation>
        <location evidence="1">Cytoplasm</location>
    </subcellularLocation>
</comment>
<comment type="miscellaneous">
    <text evidence="1">In the reaction, the free carboxyl group of octanoic acid is attached via an amide linkage to the epsilon-amino group of a specific lysine residue of lipoyl domains of lipoate-dependent enzymes.</text>
</comment>
<comment type="similarity">
    <text evidence="1">Belongs to the LipB family.</text>
</comment>
<evidence type="ECO:0000255" key="1">
    <source>
        <dbReference type="HAMAP-Rule" id="MF_00013"/>
    </source>
</evidence>
<evidence type="ECO:0000255" key="2">
    <source>
        <dbReference type="PROSITE-ProRule" id="PRU01067"/>
    </source>
</evidence>
<reference key="1">
    <citation type="journal article" date="2007" name="Genome Biol.">
        <title>Characterization and modeling of the Haemophilus influenzae core and supragenomes based on the complete genomic sequences of Rd and 12 clinical nontypeable strains.</title>
        <authorList>
            <person name="Hogg J.S."/>
            <person name="Hu F.Z."/>
            <person name="Janto B."/>
            <person name="Boissy R."/>
            <person name="Hayes J."/>
            <person name="Keefe R."/>
            <person name="Post J.C."/>
            <person name="Ehrlich G.D."/>
        </authorList>
    </citation>
    <scope>NUCLEOTIDE SEQUENCE [LARGE SCALE GENOMIC DNA]</scope>
    <source>
        <strain>PittEE</strain>
    </source>
</reference>
<dbReference type="EC" id="2.3.1.181" evidence="1"/>
<dbReference type="EMBL" id="CP000671">
    <property type="protein sequence ID" value="ABQ98062.1"/>
    <property type="molecule type" value="Genomic_DNA"/>
</dbReference>
<dbReference type="SMR" id="A5UBB1"/>
<dbReference type="KEGG" id="hip:CGSHiEE_03175"/>
<dbReference type="HOGENOM" id="CLU_035168_3_1_6"/>
<dbReference type="UniPathway" id="UPA00538">
    <property type="reaction ID" value="UER00592"/>
</dbReference>
<dbReference type="GO" id="GO:0005737">
    <property type="term" value="C:cytoplasm"/>
    <property type="evidence" value="ECO:0007669"/>
    <property type="project" value="UniProtKB-SubCell"/>
</dbReference>
<dbReference type="GO" id="GO:0033819">
    <property type="term" value="F:lipoyl(octanoyl) transferase activity"/>
    <property type="evidence" value="ECO:0007669"/>
    <property type="project" value="UniProtKB-EC"/>
</dbReference>
<dbReference type="GO" id="GO:0036211">
    <property type="term" value="P:protein modification process"/>
    <property type="evidence" value="ECO:0007669"/>
    <property type="project" value="InterPro"/>
</dbReference>
<dbReference type="CDD" id="cd16444">
    <property type="entry name" value="LipB"/>
    <property type="match status" value="1"/>
</dbReference>
<dbReference type="FunFam" id="3.30.930.10:FF:000020">
    <property type="entry name" value="Octanoyltransferase"/>
    <property type="match status" value="1"/>
</dbReference>
<dbReference type="Gene3D" id="3.30.930.10">
    <property type="entry name" value="Bira Bifunctional Protein, Domain 2"/>
    <property type="match status" value="1"/>
</dbReference>
<dbReference type="HAMAP" id="MF_00013">
    <property type="entry name" value="LipB"/>
    <property type="match status" value="1"/>
</dbReference>
<dbReference type="InterPro" id="IPR045864">
    <property type="entry name" value="aa-tRNA-synth_II/BPL/LPL"/>
</dbReference>
<dbReference type="InterPro" id="IPR004143">
    <property type="entry name" value="BPL_LPL_catalytic"/>
</dbReference>
<dbReference type="InterPro" id="IPR000544">
    <property type="entry name" value="Octanoyltransferase"/>
</dbReference>
<dbReference type="InterPro" id="IPR020605">
    <property type="entry name" value="Octanoyltransferase_CS"/>
</dbReference>
<dbReference type="NCBIfam" id="TIGR00214">
    <property type="entry name" value="lipB"/>
    <property type="match status" value="1"/>
</dbReference>
<dbReference type="NCBIfam" id="NF010922">
    <property type="entry name" value="PRK14342.1"/>
    <property type="match status" value="1"/>
</dbReference>
<dbReference type="PANTHER" id="PTHR10993:SF7">
    <property type="entry name" value="LIPOYLTRANSFERASE 2, MITOCHONDRIAL-RELATED"/>
    <property type="match status" value="1"/>
</dbReference>
<dbReference type="PANTHER" id="PTHR10993">
    <property type="entry name" value="OCTANOYLTRANSFERASE"/>
    <property type="match status" value="1"/>
</dbReference>
<dbReference type="Pfam" id="PF21948">
    <property type="entry name" value="LplA-B_cat"/>
    <property type="match status" value="1"/>
</dbReference>
<dbReference type="PIRSF" id="PIRSF016262">
    <property type="entry name" value="LPLase"/>
    <property type="match status" value="1"/>
</dbReference>
<dbReference type="SUPFAM" id="SSF55681">
    <property type="entry name" value="Class II aaRS and biotin synthetases"/>
    <property type="match status" value="1"/>
</dbReference>
<dbReference type="PROSITE" id="PS51733">
    <property type="entry name" value="BPL_LPL_CATALYTIC"/>
    <property type="match status" value="1"/>
</dbReference>
<dbReference type="PROSITE" id="PS01313">
    <property type="entry name" value="LIPB"/>
    <property type="match status" value="1"/>
</dbReference>
<accession>A5UBB1</accession>
<protein>
    <recommendedName>
        <fullName evidence="1">Octanoyltransferase</fullName>
        <ecNumber evidence="1">2.3.1.181</ecNumber>
    </recommendedName>
    <alternativeName>
        <fullName evidence="1">Lipoate-protein ligase B</fullName>
    </alternativeName>
    <alternativeName>
        <fullName evidence="1">Lipoyl/octanoyl transferase</fullName>
    </alternativeName>
    <alternativeName>
        <fullName evidence="1">Octanoyl-[acyl-carrier-protein]-protein N-octanoyltransferase</fullName>
    </alternativeName>
</protein>
<keyword id="KW-0012">Acyltransferase</keyword>
<keyword id="KW-0963">Cytoplasm</keyword>
<keyword id="KW-0808">Transferase</keyword>
<gene>
    <name evidence="1" type="primary">lipB</name>
    <name type="ordered locus">CGSHiEE_03175</name>
</gene>
<feature type="chain" id="PRO_1000001104" description="Octanoyltransferase">
    <location>
        <begin position="1"/>
        <end position="212"/>
    </location>
</feature>
<feature type="domain" description="BPL/LPL catalytic" evidence="2">
    <location>
        <begin position="31"/>
        <end position="209"/>
    </location>
</feature>
<feature type="active site" description="Acyl-thioester intermediate" evidence="1">
    <location>
        <position position="169"/>
    </location>
</feature>
<feature type="binding site" evidence="1">
    <location>
        <begin position="70"/>
        <end position="77"/>
    </location>
    <ligand>
        <name>substrate</name>
    </ligand>
</feature>
<feature type="binding site" evidence="1">
    <location>
        <begin position="138"/>
        <end position="140"/>
    </location>
    <ligand>
        <name>substrate</name>
    </ligand>
</feature>
<feature type="binding site" evidence="1">
    <location>
        <begin position="151"/>
        <end position="153"/>
    </location>
    <ligand>
        <name>substrate</name>
    </ligand>
</feature>
<feature type="site" description="Lowers pKa of active site Cys" evidence="1">
    <location>
        <position position="135"/>
    </location>
</feature>
<proteinExistence type="inferred from homology"/>
<name>LIPB_HAEIE</name>
<sequence length="212" mass="24075">MNNSLIVRQLGLQDYQEIWHKMQDFTDTRNAETQDEIWLVQHYPVFTQGQAGKPEHLLQRSEIPVVQSDRGGQITYHAPGQQVMYVLIDIKRHKNLNVRQLVTALEQTVVKTLAEYGIESYPKPDAPGVYVDGKKICSLGLRIRRGCSFHGLALNINMDLNPFHYINPCGYAGLEMCQLADFVNQDEADCDNVSAKLIKHFADLLGYNITTL</sequence>